<gene>
    <name type="ordered locus">MT1895</name>
</gene>
<comment type="similarity">
    <text evidence="1">Belongs to the thioesterase PaaI family.</text>
</comment>
<sequence>MQPSPDSPAPLNVTVPFDSELGLQFTELGPDGARAQLDVRPKLLQLTGVVHGGVYCAMIESIASMAAFAWLNSHGEGGSVVGVNNNTDFVRSISSGMVYGTAEPLHRGRRQQLWLVTITDDTDRVVARGQVRLQNLEARP</sequence>
<proteinExistence type="inferred from homology"/>
<feature type="chain" id="PRO_0000427981" description="Putative esterase MT1895">
    <location>
        <begin position="1"/>
        <end position="140"/>
    </location>
</feature>
<organism>
    <name type="scientific">Mycobacterium tuberculosis (strain CDC 1551 / Oshkosh)</name>
    <dbReference type="NCBI Taxonomy" id="83331"/>
    <lineage>
        <taxon>Bacteria</taxon>
        <taxon>Bacillati</taxon>
        <taxon>Actinomycetota</taxon>
        <taxon>Actinomycetes</taxon>
        <taxon>Mycobacteriales</taxon>
        <taxon>Mycobacteriaceae</taxon>
        <taxon>Mycobacterium</taxon>
        <taxon>Mycobacterium tuberculosis complex</taxon>
    </lineage>
</organism>
<keyword id="KW-0378">Hydrolase</keyword>
<keyword id="KW-1185">Reference proteome</keyword>
<accession>P9WIM2</accession>
<accession>L0T825</accession>
<accession>P95162</accession>
<evidence type="ECO:0000305" key="1"/>
<dbReference type="EC" id="3.1.2.-"/>
<dbReference type="EMBL" id="AE000516">
    <property type="protein sequence ID" value="AAK46166.1"/>
    <property type="molecule type" value="Genomic_DNA"/>
</dbReference>
<dbReference type="PIR" id="G70664">
    <property type="entry name" value="G70664"/>
</dbReference>
<dbReference type="RefSeq" id="WP_003899048.1">
    <property type="nucleotide sequence ID" value="NZ_KK341227.1"/>
</dbReference>
<dbReference type="SMR" id="P9WIM2"/>
<dbReference type="KEGG" id="mtc:MT1895"/>
<dbReference type="PATRIC" id="fig|83331.31.peg.2039"/>
<dbReference type="HOGENOM" id="CLU_089876_13_3_11"/>
<dbReference type="Proteomes" id="UP000001020">
    <property type="component" value="Chromosome"/>
</dbReference>
<dbReference type="GO" id="GO:0005829">
    <property type="term" value="C:cytosol"/>
    <property type="evidence" value="ECO:0007669"/>
    <property type="project" value="TreeGrafter"/>
</dbReference>
<dbReference type="GO" id="GO:0061522">
    <property type="term" value="F:1,4-dihydroxy-2-naphthoyl-CoA thioesterase activity"/>
    <property type="evidence" value="ECO:0007669"/>
    <property type="project" value="TreeGrafter"/>
</dbReference>
<dbReference type="CDD" id="cd03443">
    <property type="entry name" value="PaaI_thioesterase"/>
    <property type="match status" value="1"/>
</dbReference>
<dbReference type="Gene3D" id="3.10.129.10">
    <property type="entry name" value="Hotdog Thioesterase"/>
    <property type="match status" value="1"/>
</dbReference>
<dbReference type="InterPro" id="IPR029069">
    <property type="entry name" value="HotDog_dom_sf"/>
</dbReference>
<dbReference type="InterPro" id="IPR003736">
    <property type="entry name" value="PAAI_dom"/>
</dbReference>
<dbReference type="InterPro" id="IPR006683">
    <property type="entry name" value="Thioestr_dom"/>
</dbReference>
<dbReference type="NCBIfam" id="TIGR00369">
    <property type="entry name" value="unchar_dom_1"/>
    <property type="match status" value="1"/>
</dbReference>
<dbReference type="PANTHER" id="PTHR43240">
    <property type="entry name" value="1,4-DIHYDROXY-2-NAPHTHOYL-COA THIOESTERASE 1"/>
    <property type="match status" value="1"/>
</dbReference>
<dbReference type="PANTHER" id="PTHR43240:SF5">
    <property type="entry name" value="1,4-DIHYDROXY-2-NAPHTHOYL-COA THIOESTERASE 1"/>
    <property type="match status" value="1"/>
</dbReference>
<dbReference type="Pfam" id="PF03061">
    <property type="entry name" value="4HBT"/>
    <property type="match status" value="1"/>
</dbReference>
<dbReference type="SUPFAM" id="SSF54637">
    <property type="entry name" value="Thioesterase/thiol ester dehydrase-isomerase"/>
    <property type="match status" value="1"/>
</dbReference>
<protein>
    <recommendedName>
        <fullName>Putative esterase MT1895</fullName>
        <ecNumber>3.1.2.-</ecNumber>
    </recommendedName>
</protein>
<name>Y1847_MYCTO</name>
<reference key="1">
    <citation type="journal article" date="2002" name="J. Bacteriol.">
        <title>Whole-genome comparison of Mycobacterium tuberculosis clinical and laboratory strains.</title>
        <authorList>
            <person name="Fleischmann R.D."/>
            <person name="Alland D."/>
            <person name="Eisen J.A."/>
            <person name="Carpenter L."/>
            <person name="White O."/>
            <person name="Peterson J.D."/>
            <person name="DeBoy R.T."/>
            <person name="Dodson R.J."/>
            <person name="Gwinn M.L."/>
            <person name="Haft D.H."/>
            <person name="Hickey E.K."/>
            <person name="Kolonay J.F."/>
            <person name="Nelson W.C."/>
            <person name="Umayam L.A."/>
            <person name="Ermolaeva M.D."/>
            <person name="Salzberg S.L."/>
            <person name="Delcher A."/>
            <person name="Utterback T.R."/>
            <person name="Weidman J.F."/>
            <person name="Khouri H.M."/>
            <person name="Gill J."/>
            <person name="Mikula A."/>
            <person name="Bishai W."/>
            <person name="Jacobs W.R. Jr."/>
            <person name="Venter J.C."/>
            <person name="Fraser C.M."/>
        </authorList>
    </citation>
    <scope>NUCLEOTIDE SEQUENCE [LARGE SCALE GENOMIC DNA]</scope>
    <source>
        <strain>CDC 1551 / Oshkosh</strain>
    </source>
</reference>